<name>Y7I9_ENCCU</name>
<reference key="1">
    <citation type="journal article" date="2001" name="Nature">
        <title>Genome sequence and gene compaction of the eukaryote parasite Encephalitozoon cuniculi.</title>
        <authorList>
            <person name="Katinka M.D."/>
            <person name="Duprat S."/>
            <person name="Cornillot E."/>
            <person name="Metenier G."/>
            <person name="Thomarat F."/>
            <person name="Prensier G."/>
            <person name="Barbe V."/>
            <person name="Peyretaillade E."/>
            <person name="Brottier P."/>
            <person name="Wincker P."/>
            <person name="Delbac F."/>
            <person name="El Alaoui H."/>
            <person name="Peyret P."/>
            <person name="Saurin W."/>
            <person name="Gouy M."/>
            <person name="Weissenbach J."/>
            <person name="Vivares C.P."/>
        </authorList>
    </citation>
    <scope>NUCLEOTIDE SEQUENCE [LARGE SCALE GENOMIC DNA]</scope>
    <source>
        <strain>GB-M1</strain>
    </source>
</reference>
<reference key="2">
    <citation type="journal article" date="2009" name="BMC Genomics">
        <title>Identification of transcriptional signals in Encephalitozoon cuniculi widespread among Microsporidia phylum: support for accurate structural genome annotation.</title>
        <authorList>
            <person name="Peyretaillade E."/>
            <person name="Goncalves O."/>
            <person name="Terrat S."/>
            <person name="Dugat-Bony E."/>
            <person name="Wincker P."/>
            <person name="Cornman R.S."/>
            <person name="Evans J.D."/>
            <person name="Delbac F."/>
            <person name="Peyret P."/>
        </authorList>
    </citation>
    <scope>GENOME REANNOTATION</scope>
    <source>
        <strain>GB-M1</strain>
    </source>
</reference>
<sequence length="419" mass="47636">MSEEEKKVYLEDWRSAKEWGGFLYSIERWERIAEVEKIVCNACKEICLGLREEELLGLLAEGGMKKTLKEEFSEDKAKDARYLEYIVVDDVLLLDAHREYGGEVTKELVRQMLLGKEGKDIDKRYVDRVAGVVRERQRKREEETERSVKELVGDEEKAKSKEEKAKSKRGRKGKSASAPSEQEEEKKESEVEEAEQGGEVEALPVEVGGARSKGGKKKSKGGRKCFKIHRRVLRWTKSPEKIKEEWDKGSEERWKGRSLEEIKEQKIVHDITGVLELLRSEDADRFFMDAGKYRKGGSERQRMVAIGALETGGQRMTGVVEVGTFKDGDGCPVVYHLRFKPTSIGSIGDVINPGVVEASDVGRVDEGEECEDADKFVYPKGVRFETVKETGSFQIVWKNPSDTSEVLRRLIVYCRPCVI</sequence>
<feature type="chain" id="PRO_0000223174" description="UPF0329 protein ECU07_1890/ECU10_0010">
    <location>
        <begin position="1"/>
        <end position="419"/>
    </location>
</feature>
<feature type="region of interest" description="Disordered" evidence="1">
    <location>
        <begin position="136"/>
        <end position="222"/>
    </location>
</feature>
<feature type="compositionally biased region" description="Basic and acidic residues" evidence="1">
    <location>
        <begin position="136"/>
        <end position="165"/>
    </location>
</feature>
<feature type="compositionally biased region" description="Basic residues" evidence="1">
    <location>
        <begin position="213"/>
        <end position="222"/>
    </location>
</feature>
<comment type="similarity">
    <text evidence="2">Belongs to the UPF0329 family.</text>
</comment>
<evidence type="ECO:0000256" key="1">
    <source>
        <dbReference type="SAM" id="MobiDB-lite"/>
    </source>
</evidence>
<evidence type="ECO:0000305" key="2"/>
<gene>
    <name type="ordered locus">ECU07_1890</name>
</gene>
<gene>
    <name type="ordered locus">ECU10_0010</name>
</gene>
<organism>
    <name type="scientific">Encephalitozoon cuniculi (strain GB-M1)</name>
    <name type="common">Microsporidian parasite</name>
    <dbReference type="NCBI Taxonomy" id="284813"/>
    <lineage>
        <taxon>Eukaryota</taxon>
        <taxon>Fungi</taxon>
        <taxon>Fungi incertae sedis</taxon>
        <taxon>Microsporidia</taxon>
        <taxon>Unikaryonidae</taxon>
        <taxon>Encephalitozoon</taxon>
    </lineage>
</organism>
<protein>
    <recommendedName>
        <fullName>UPF0329 protein ECU07_1890/ECU10_0010</fullName>
    </recommendedName>
</protein>
<proteinExistence type="inferred from homology"/>
<keyword id="KW-1185">Reference proteome</keyword>
<accession>Q8ST30</accession>
<dbReference type="EMBL" id="AL590447">
    <property type="protein sequence ID" value="CAD25720.2"/>
    <property type="molecule type" value="Genomic_DNA"/>
</dbReference>
<dbReference type="EMBL" id="AL590449">
    <property type="protein sequence ID" value="CAD25721.2"/>
    <property type="molecule type" value="Genomic_DNA"/>
</dbReference>
<dbReference type="RefSeq" id="NP_586116.2">
    <property type="nucleotide sequence ID" value="NM_001041738.2"/>
</dbReference>
<dbReference type="RefSeq" id="NP_586117.1">
    <property type="nucleotide sequence ID" value="NM_001041950.1"/>
</dbReference>
<dbReference type="SMR" id="Q8ST30"/>
<dbReference type="STRING" id="284813.Q8ST30"/>
<dbReference type="GeneID" id="859550"/>
<dbReference type="GeneID" id="859763"/>
<dbReference type="KEGG" id="ecu:ECU07_1890"/>
<dbReference type="KEGG" id="ecu:ECU10_0010"/>
<dbReference type="VEuPathDB" id="MicrosporidiaDB:ECU07_1890"/>
<dbReference type="VEuPathDB" id="MicrosporidiaDB:ECU10_0010"/>
<dbReference type="HOGENOM" id="CLU_035434_0_0_1"/>
<dbReference type="InParanoid" id="Q8ST30"/>
<dbReference type="OrthoDB" id="2162691at2759"/>
<dbReference type="Proteomes" id="UP000000819">
    <property type="component" value="Chromosome VII"/>
</dbReference>
<dbReference type="Proteomes" id="UP000000819">
    <property type="component" value="Chromosome X"/>
</dbReference>
<dbReference type="InterPro" id="IPR022115">
    <property type="entry name" value="DUF3654"/>
</dbReference>
<dbReference type="InterPro" id="IPR011667">
    <property type="entry name" value="UPF0329"/>
</dbReference>
<dbReference type="Pfam" id="PF07753">
    <property type="entry name" value="DUF1609"/>
    <property type="match status" value="1"/>
</dbReference>
<dbReference type="Pfam" id="PF12376">
    <property type="entry name" value="DUF3654"/>
    <property type="match status" value="1"/>
</dbReference>